<organism>
    <name type="scientific">Campylobacter curvus (strain 525.92)</name>
    <dbReference type="NCBI Taxonomy" id="360105"/>
    <lineage>
        <taxon>Bacteria</taxon>
        <taxon>Pseudomonadati</taxon>
        <taxon>Campylobacterota</taxon>
        <taxon>Epsilonproteobacteria</taxon>
        <taxon>Campylobacterales</taxon>
        <taxon>Campylobacteraceae</taxon>
        <taxon>Campylobacter</taxon>
    </lineage>
</organism>
<reference key="1">
    <citation type="submission" date="2007-07" db="EMBL/GenBank/DDBJ databases">
        <title>Genome sequence of Campylobacter curvus 525.92 isolated from human feces.</title>
        <authorList>
            <person name="Fouts D.E."/>
            <person name="Mongodin E.F."/>
            <person name="Puiu D."/>
            <person name="Sebastian Y."/>
            <person name="Miller W.G."/>
            <person name="Mandrell R.E."/>
            <person name="Lastovica A.J."/>
            <person name="Nelson K.E."/>
        </authorList>
    </citation>
    <scope>NUCLEOTIDE SEQUENCE [LARGE SCALE GENOMIC DNA]</scope>
    <source>
        <strain>525.92</strain>
    </source>
</reference>
<sequence length="550" mass="59241">MLSDIEITHLAKLDHISKIGAKLGLGEDDMELYGKFKAKIEPRLDGSNSKLILVTATSPTPFGEGKTTMSIGLADALNRLVKKVCLALREPSLGPVFGIKGGAAGGGYSQLAPMEDLNLHFTGDFHAITSANNLISAMIDNSLYQENPLNIDKILWKRCMDMNDRALRFITVGQGGKADGVEREDGFNITAASEIMAILCLATSLADLKERIANIMVAYNDRGEPIYVRDLGCEDAVCILLKDAMKPNLFQTIEHTPTLVHGGPFANIAHGCNSIIATKTALNLADFVITEAGFGSELGAEKFIDIKCRVAGIAPDAVVLVSTIRSLKYNGGADKESITKPNMSALEVGIANLGGHIENLKQKFGLNVVVALNKFGFDEDSEIDFVRDYCAKFGVKMAVCENFVKGGEGALELANFVLEELKKPNDMKFAYETSDDTKSKITKIATEIYGAGEVVFEEAAQKALEKIKKLGLEKLPVCIAKTQYSFSDDAKLLGRAKGFKFSVKDLQIRTGAGFIVAVCGKIMLMPGLPKTPSALNMHIDTKTGEISGLA</sequence>
<proteinExistence type="inferred from homology"/>
<dbReference type="EC" id="6.3.4.3" evidence="1"/>
<dbReference type="EMBL" id="CP000767">
    <property type="protein sequence ID" value="EAT99584.1"/>
    <property type="molecule type" value="Genomic_DNA"/>
</dbReference>
<dbReference type="RefSeq" id="WP_011992625.1">
    <property type="nucleotide sequence ID" value="NC_009715.2"/>
</dbReference>
<dbReference type="SMR" id="A7GZZ0"/>
<dbReference type="STRING" id="360105.CCV52592_0358"/>
<dbReference type="KEGG" id="ccv:CCV52592_0358"/>
<dbReference type="HOGENOM" id="CLU_003601_3_3_7"/>
<dbReference type="OrthoDB" id="9761733at2"/>
<dbReference type="UniPathway" id="UPA00193"/>
<dbReference type="Proteomes" id="UP000006380">
    <property type="component" value="Chromosome"/>
</dbReference>
<dbReference type="GO" id="GO:0005524">
    <property type="term" value="F:ATP binding"/>
    <property type="evidence" value="ECO:0007669"/>
    <property type="project" value="UniProtKB-UniRule"/>
</dbReference>
<dbReference type="GO" id="GO:0004329">
    <property type="term" value="F:formate-tetrahydrofolate ligase activity"/>
    <property type="evidence" value="ECO:0007669"/>
    <property type="project" value="UniProtKB-UniRule"/>
</dbReference>
<dbReference type="GO" id="GO:0035999">
    <property type="term" value="P:tetrahydrofolate interconversion"/>
    <property type="evidence" value="ECO:0007669"/>
    <property type="project" value="UniProtKB-UniRule"/>
</dbReference>
<dbReference type="CDD" id="cd00477">
    <property type="entry name" value="FTHFS"/>
    <property type="match status" value="1"/>
</dbReference>
<dbReference type="FunFam" id="3.30.1510.10:FF:000001">
    <property type="entry name" value="Formate--tetrahydrofolate ligase"/>
    <property type="match status" value="1"/>
</dbReference>
<dbReference type="FunFam" id="3.10.410.10:FF:000001">
    <property type="entry name" value="Putative formate--tetrahydrofolate ligase"/>
    <property type="match status" value="1"/>
</dbReference>
<dbReference type="Gene3D" id="3.30.1510.10">
    <property type="entry name" value="Domain 2, N(10)-formyltetrahydrofolate synthetase"/>
    <property type="match status" value="1"/>
</dbReference>
<dbReference type="Gene3D" id="3.10.410.10">
    <property type="entry name" value="Formyltetrahydrofolate synthetase, domain 3"/>
    <property type="match status" value="1"/>
</dbReference>
<dbReference type="Gene3D" id="3.40.50.300">
    <property type="entry name" value="P-loop containing nucleotide triphosphate hydrolases"/>
    <property type="match status" value="1"/>
</dbReference>
<dbReference type="HAMAP" id="MF_01543">
    <property type="entry name" value="FTHFS"/>
    <property type="match status" value="1"/>
</dbReference>
<dbReference type="InterPro" id="IPR000559">
    <property type="entry name" value="Formate_THF_ligase"/>
</dbReference>
<dbReference type="InterPro" id="IPR020628">
    <property type="entry name" value="Formate_THF_ligase_CS"/>
</dbReference>
<dbReference type="InterPro" id="IPR027417">
    <property type="entry name" value="P-loop_NTPase"/>
</dbReference>
<dbReference type="NCBIfam" id="NF010030">
    <property type="entry name" value="PRK13505.1"/>
    <property type="match status" value="1"/>
</dbReference>
<dbReference type="Pfam" id="PF01268">
    <property type="entry name" value="FTHFS"/>
    <property type="match status" value="1"/>
</dbReference>
<dbReference type="SUPFAM" id="SSF52540">
    <property type="entry name" value="P-loop containing nucleoside triphosphate hydrolases"/>
    <property type="match status" value="1"/>
</dbReference>
<dbReference type="PROSITE" id="PS00721">
    <property type="entry name" value="FTHFS_1"/>
    <property type="match status" value="1"/>
</dbReference>
<dbReference type="PROSITE" id="PS00722">
    <property type="entry name" value="FTHFS_2"/>
    <property type="match status" value="1"/>
</dbReference>
<keyword id="KW-0067">ATP-binding</keyword>
<keyword id="KW-0436">Ligase</keyword>
<keyword id="KW-0547">Nucleotide-binding</keyword>
<keyword id="KW-0554">One-carbon metabolism</keyword>
<keyword id="KW-1185">Reference proteome</keyword>
<evidence type="ECO:0000255" key="1">
    <source>
        <dbReference type="HAMAP-Rule" id="MF_01543"/>
    </source>
</evidence>
<name>FTHS_CAMC5</name>
<comment type="catalytic activity">
    <reaction evidence="1">
        <text>(6S)-5,6,7,8-tetrahydrofolate + formate + ATP = (6R)-10-formyltetrahydrofolate + ADP + phosphate</text>
        <dbReference type="Rhea" id="RHEA:20221"/>
        <dbReference type="ChEBI" id="CHEBI:15740"/>
        <dbReference type="ChEBI" id="CHEBI:30616"/>
        <dbReference type="ChEBI" id="CHEBI:43474"/>
        <dbReference type="ChEBI" id="CHEBI:57453"/>
        <dbReference type="ChEBI" id="CHEBI:195366"/>
        <dbReference type="ChEBI" id="CHEBI:456216"/>
        <dbReference type="EC" id="6.3.4.3"/>
    </reaction>
</comment>
<comment type="pathway">
    <text evidence="1">One-carbon metabolism; tetrahydrofolate interconversion.</text>
</comment>
<comment type="similarity">
    <text evidence="1">Belongs to the formate--tetrahydrofolate ligase family.</text>
</comment>
<gene>
    <name evidence="1" type="primary">fhs</name>
    <name type="ordered locus">Ccur92_14780</name>
    <name type="ORF">CCV52592_0358</name>
</gene>
<protein>
    <recommendedName>
        <fullName evidence="1">Formate--tetrahydrofolate ligase</fullName>
        <ecNumber evidence="1">6.3.4.3</ecNumber>
    </recommendedName>
    <alternativeName>
        <fullName evidence="1">Formyltetrahydrofolate synthetase</fullName>
        <shortName evidence="1">FHS</shortName>
        <shortName evidence="1">FTHFS</shortName>
    </alternativeName>
</protein>
<feature type="chain" id="PRO_1000068789" description="Formate--tetrahydrofolate ligase">
    <location>
        <begin position="1"/>
        <end position="550"/>
    </location>
</feature>
<feature type="binding site" evidence="1">
    <location>
        <begin position="60"/>
        <end position="67"/>
    </location>
    <ligand>
        <name>ATP</name>
        <dbReference type="ChEBI" id="CHEBI:30616"/>
    </ligand>
</feature>
<accession>A7GZZ0</accession>